<sequence>MVKSQRNGKKGAKVLSRKEKRQSEKEEMDSLRQRIEEYNPEVDEASIKHFSDLPITQNTLRGLKECSFVSLTDIQKKSIPVALKGEDLMGTARTGSGKTLAFLIPVIEILLRNDITEYDGLAALIVSPTRELAVQIFEVLAKIGKYNSFSAGLVTGGKDVQYEKERISRMNILVGTPGRISQHLNESVGMETSNLQVLVLDEADRCLDMGFRKQIDNILNHLPRTRQTLLFSATHTDSVQDLARLSLTNPKRIGTSSDQDISAIPESLDQYYVKVPLNEKLDVLWSFIKSHLKSKILVFFSSSKQVQYAYETFRTLQPGIPLMKLYGRHKQTSRLETTVKFSQAQHACLFATDIVARGLDFPAIDWVIQVDCPEDVATYVHRVGRSARFGRQGKSLLMLLPTEEDGMLKRMKVHKIEPKMMNIKEKSKKSIRPQLQSLCFKDPVIKNLGQRAFIAYFRSVYIQKDKDIFKVDELPVEEYAASLGLPGAPKIKIKGGEINKEKKNQSRKLLQLSKADENGELKEDDDKPAKVRTKYDRIFDRKNQTILSEHYLNMTKSAHGGKDDDEDEDFMTVKRQDHELVDDELPDLLLPVSKRQAKKALSRKATLASKGNPTKLKFDDDGVPHAIYELEGEEDFEKAGDAKQQKMEFVQKEQEAMKITDLADREVERQKRQEKKRKRKEIERRIREEEWDDGSGMDGEDLPDLERDMEPTEAKPKRTSNWFDDDDDDNDGGDEKHGNGKPPVKKAKSDSKYVEFEEPETLEDLESLAATLIGN</sequence>
<feature type="chain" id="PRO_0000294622" description="ATP-dependent RNA helicase DBP4">
    <location>
        <begin position="1"/>
        <end position="775"/>
    </location>
</feature>
<feature type="domain" description="Helicase ATP-binding" evidence="2">
    <location>
        <begin position="79"/>
        <end position="253"/>
    </location>
</feature>
<feature type="domain" description="Helicase C-terminal" evidence="3">
    <location>
        <begin position="267"/>
        <end position="439"/>
    </location>
</feature>
<feature type="region of interest" description="Disordered" evidence="4">
    <location>
        <begin position="1"/>
        <end position="30"/>
    </location>
</feature>
<feature type="region of interest" description="Disordered" evidence="4">
    <location>
        <begin position="633"/>
        <end position="760"/>
    </location>
</feature>
<feature type="short sequence motif" description="Q motif">
    <location>
        <begin position="48"/>
        <end position="76"/>
    </location>
</feature>
<feature type="short sequence motif" description="DEAD box">
    <location>
        <begin position="201"/>
        <end position="204"/>
    </location>
</feature>
<feature type="compositionally biased region" description="Basic residues" evidence="4">
    <location>
        <begin position="1"/>
        <end position="12"/>
    </location>
</feature>
<feature type="compositionally biased region" description="Basic and acidic residues" evidence="4">
    <location>
        <begin position="21"/>
        <end position="30"/>
    </location>
</feature>
<feature type="compositionally biased region" description="Basic and acidic residues" evidence="4">
    <location>
        <begin position="637"/>
        <end position="671"/>
    </location>
</feature>
<feature type="compositionally biased region" description="Acidic residues" evidence="4">
    <location>
        <begin position="689"/>
        <end position="703"/>
    </location>
</feature>
<feature type="compositionally biased region" description="Basic and acidic residues" evidence="4">
    <location>
        <begin position="704"/>
        <end position="716"/>
    </location>
</feature>
<feature type="compositionally biased region" description="Acidic residues" evidence="4">
    <location>
        <begin position="723"/>
        <end position="732"/>
    </location>
</feature>
<feature type="binding site" evidence="2">
    <location>
        <begin position="92"/>
        <end position="99"/>
    </location>
    <ligand>
        <name>ATP</name>
        <dbReference type="ChEBI" id="CHEBI:30616"/>
    </ligand>
</feature>
<gene>
    <name type="primary">DBP4</name>
    <name type="ORF">LELG_04190</name>
</gene>
<protein>
    <recommendedName>
        <fullName>ATP-dependent RNA helicase DBP4</fullName>
        <ecNumber>3.6.4.13</ecNumber>
    </recommendedName>
</protein>
<comment type="function">
    <text evidence="1">ATP-dependent RNA helicase required for ribosome biogenesis. Involved in the release of U14 snoRNA in pre-ribosomal complexes. Required for pre-rRNA cleavage at site A2 (By similarity).</text>
</comment>
<comment type="catalytic activity">
    <reaction>
        <text>ATP + H2O = ADP + phosphate + H(+)</text>
        <dbReference type="Rhea" id="RHEA:13065"/>
        <dbReference type="ChEBI" id="CHEBI:15377"/>
        <dbReference type="ChEBI" id="CHEBI:15378"/>
        <dbReference type="ChEBI" id="CHEBI:30616"/>
        <dbReference type="ChEBI" id="CHEBI:43474"/>
        <dbReference type="ChEBI" id="CHEBI:456216"/>
        <dbReference type="EC" id="3.6.4.13"/>
    </reaction>
</comment>
<comment type="subunit">
    <text evidence="1">Interacts with the U3 and U14 snoRNAs. Associates with pre-ribosomal complexes (By similarity).</text>
</comment>
<comment type="subcellular location">
    <subcellularLocation>
        <location evidence="1">Nucleus</location>
        <location evidence="1">Nucleolus</location>
    </subcellularLocation>
</comment>
<comment type="domain">
    <text>The Q motif is unique to and characteristic of the DEAD box family of RNA helicases and controls ATP binding and hydrolysis.</text>
</comment>
<comment type="similarity">
    <text evidence="5">Belongs to the DEAD box helicase family. DDX10/DBP4 subfamily.</text>
</comment>
<accession>A5E3K3</accession>
<dbReference type="EC" id="3.6.4.13"/>
<dbReference type="EMBL" id="CH981529">
    <property type="protein sequence ID" value="EDK46011.1"/>
    <property type="molecule type" value="Genomic_DNA"/>
</dbReference>
<dbReference type="RefSeq" id="XP_001524220.1">
    <property type="nucleotide sequence ID" value="XM_001524170.1"/>
</dbReference>
<dbReference type="SMR" id="A5E3K3"/>
<dbReference type="FunCoup" id="A5E3K3">
    <property type="interactions" value="1030"/>
</dbReference>
<dbReference type="STRING" id="379508.A5E3K3"/>
<dbReference type="GeneID" id="5231341"/>
<dbReference type="KEGG" id="lel:PVL30_003915"/>
<dbReference type="VEuPathDB" id="FungiDB:LELG_04190"/>
<dbReference type="eggNOG" id="KOG0343">
    <property type="taxonomic scope" value="Eukaryota"/>
</dbReference>
<dbReference type="HOGENOM" id="CLU_003041_26_1_1"/>
<dbReference type="InParanoid" id="A5E3K3"/>
<dbReference type="OMA" id="YDKMFER"/>
<dbReference type="OrthoDB" id="10259640at2759"/>
<dbReference type="Proteomes" id="UP000001996">
    <property type="component" value="Unassembled WGS sequence"/>
</dbReference>
<dbReference type="GO" id="GO:0005730">
    <property type="term" value="C:nucleolus"/>
    <property type="evidence" value="ECO:0007669"/>
    <property type="project" value="UniProtKB-SubCell"/>
</dbReference>
<dbReference type="GO" id="GO:0032040">
    <property type="term" value="C:small-subunit processome"/>
    <property type="evidence" value="ECO:0007669"/>
    <property type="project" value="EnsemblFungi"/>
</dbReference>
<dbReference type="GO" id="GO:0005524">
    <property type="term" value="F:ATP binding"/>
    <property type="evidence" value="ECO:0007669"/>
    <property type="project" value="UniProtKB-KW"/>
</dbReference>
<dbReference type="GO" id="GO:0016887">
    <property type="term" value="F:ATP hydrolysis activity"/>
    <property type="evidence" value="ECO:0007669"/>
    <property type="project" value="RHEA"/>
</dbReference>
<dbReference type="GO" id="GO:0042802">
    <property type="term" value="F:identical protein binding"/>
    <property type="evidence" value="ECO:0007669"/>
    <property type="project" value="EnsemblFungi"/>
</dbReference>
<dbReference type="GO" id="GO:0003723">
    <property type="term" value="F:RNA binding"/>
    <property type="evidence" value="ECO:0007669"/>
    <property type="project" value="UniProtKB-KW"/>
</dbReference>
<dbReference type="GO" id="GO:0003724">
    <property type="term" value="F:RNA helicase activity"/>
    <property type="evidence" value="ECO:0007669"/>
    <property type="project" value="UniProtKB-EC"/>
</dbReference>
<dbReference type="GO" id="GO:0006364">
    <property type="term" value="P:rRNA processing"/>
    <property type="evidence" value="ECO:0007669"/>
    <property type="project" value="UniProtKB-KW"/>
</dbReference>
<dbReference type="CDD" id="cd17941">
    <property type="entry name" value="DEADc_DDX10"/>
    <property type="match status" value="1"/>
</dbReference>
<dbReference type="CDD" id="cd18787">
    <property type="entry name" value="SF2_C_DEAD"/>
    <property type="match status" value="1"/>
</dbReference>
<dbReference type="Gene3D" id="3.40.50.300">
    <property type="entry name" value="P-loop containing nucleotide triphosphate hydrolases"/>
    <property type="match status" value="2"/>
</dbReference>
<dbReference type="InterPro" id="IPR011545">
    <property type="entry name" value="DEAD/DEAH_box_helicase_dom"/>
</dbReference>
<dbReference type="InterPro" id="IPR014001">
    <property type="entry name" value="Helicase_ATP-bd"/>
</dbReference>
<dbReference type="InterPro" id="IPR001650">
    <property type="entry name" value="Helicase_C-like"/>
</dbReference>
<dbReference type="InterPro" id="IPR027417">
    <property type="entry name" value="P-loop_NTPase"/>
</dbReference>
<dbReference type="InterPro" id="IPR000629">
    <property type="entry name" value="RNA-helicase_DEAD-box_CS"/>
</dbReference>
<dbReference type="InterPro" id="IPR014014">
    <property type="entry name" value="RNA_helicase_DEAD_Q_motif"/>
</dbReference>
<dbReference type="InterPro" id="IPR025313">
    <property type="entry name" value="SPB4-like_CTE"/>
</dbReference>
<dbReference type="PANTHER" id="PTHR24031">
    <property type="entry name" value="RNA HELICASE"/>
    <property type="match status" value="1"/>
</dbReference>
<dbReference type="Pfam" id="PF13959">
    <property type="entry name" value="CTE_SPB4"/>
    <property type="match status" value="1"/>
</dbReference>
<dbReference type="Pfam" id="PF00270">
    <property type="entry name" value="DEAD"/>
    <property type="match status" value="1"/>
</dbReference>
<dbReference type="Pfam" id="PF00271">
    <property type="entry name" value="Helicase_C"/>
    <property type="match status" value="1"/>
</dbReference>
<dbReference type="SMART" id="SM00487">
    <property type="entry name" value="DEXDc"/>
    <property type="match status" value="1"/>
</dbReference>
<dbReference type="SMART" id="SM01178">
    <property type="entry name" value="DUF4217"/>
    <property type="match status" value="1"/>
</dbReference>
<dbReference type="SMART" id="SM00490">
    <property type="entry name" value="HELICc"/>
    <property type="match status" value="1"/>
</dbReference>
<dbReference type="SUPFAM" id="SSF52540">
    <property type="entry name" value="P-loop containing nucleoside triphosphate hydrolases"/>
    <property type="match status" value="2"/>
</dbReference>
<dbReference type="PROSITE" id="PS00039">
    <property type="entry name" value="DEAD_ATP_HELICASE"/>
    <property type="match status" value="1"/>
</dbReference>
<dbReference type="PROSITE" id="PS51192">
    <property type="entry name" value="HELICASE_ATP_BIND_1"/>
    <property type="match status" value="1"/>
</dbReference>
<dbReference type="PROSITE" id="PS51194">
    <property type="entry name" value="HELICASE_CTER"/>
    <property type="match status" value="1"/>
</dbReference>
<dbReference type="PROSITE" id="PS51195">
    <property type="entry name" value="Q_MOTIF"/>
    <property type="match status" value="1"/>
</dbReference>
<proteinExistence type="inferred from homology"/>
<keyword id="KW-0067">ATP-binding</keyword>
<keyword id="KW-0347">Helicase</keyword>
<keyword id="KW-0378">Hydrolase</keyword>
<keyword id="KW-0547">Nucleotide-binding</keyword>
<keyword id="KW-0539">Nucleus</keyword>
<keyword id="KW-1185">Reference proteome</keyword>
<keyword id="KW-0690">Ribosome biogenesis</keyword>
<keyword id="KW-0694">RNA-binding</keyword>
<keyword id="KW-0698">rRNA processing</keyword>
<evidence type="ECO:0000250" key="1"/>
<evidence type="ECO:0000255" key="2">
    <source>
        <dbReference type="PROSITE-ProRule" id="PRU00541"/>
    </source>
</evidence>
<evidence type="ECO:0000255" key="3">
    <source>
        <dbReference type="PROSITE-ProRule" id="PRU00542"/>
    </source>
</evidence>
<evidence type="ECO:0000256" key="4">
    <source>
        <dbReference type="SAM" id="MobiDB-lite"/>
    </source>
</evidence>
<evidence type="ECO:0000305" key="5"/>
<reference key="1">
    <citation type="journal article" date="2009" name="Nature">
        <title>Evolution of pathogenicity and sexual reproduction in eight Candida genomes.</title>
        <authorList>
            <person name="Butler G."/>
            <person name="Rasmussen M.D."/>
            <person name="Lin M.F."/>
            <person name="Santos M.A.S."/>
            <person name="Sakthikumar S."/>
            <person name="Munro C.A."/>
            <person name="Rheinbay E."/>
            <person name="Grabherr M."/>
            <person name="Forche A."/>
            <person name="Reedy J.L."/>
            <person name="Agrafioti I."/>
            <person name="Arnaud M.B."/>
            <person name="Bates S."/>
            <person name="Brown A.J.P."/>
            <person name="Brunke S."/>
            <person name="Costanzo M.C."/>
            <person name="Fitzpatrick D.A."/>
            <person name="de Groot P.W.J."/>
            <person name="Harris D."/>
            <person name="Hoyer L.L."/>
            <person name="Hube B."/>
            <person name="Klis F.M."/>
            <person name="Kodira C."/>
            <person name="Lennard N."/>
            <person name="Logue M.E."/>
            <person name="Martin R."/>
            <person name="Neiman A.M."/>
            <person name="Nikolaou E."/>
            <person name="Quail M.A."/>
            <person name="Quinn J."/>
            <person name="Santos M.C."/>
            <person name="Schmitzberger F.F."/>
            <person name="Sherlock G."/>
            <person name="Shah P."/>
            <person name="Silverstein K.A.T."/>
            <person name="Skrzypek M.S."/>
            <person name="Soll D."/>
            <person name="Staggs R."/>
            <person name="Stansfield I."/>
            <person name="Stumpf M.P.H."/>
            <person name="Sudbery P.E."/>
            <person name="Srikantha T."/>
            <person name="Zeng Q."/>
            <person name="Berman J."/>
            <person name="Berriman M."/>
            <person name="Heitman J."/>
            <person name="Gow N.A.R."/>
            <person name="Lorenz M.C."/>
            <person name="Birren B.W."/>
            <person name="Kellis M."/>
            <person name="Cuomo C.A."/>
        </authorList>
    </citation>
    <scope>NUCLEOTIDE SEQUENCE [LARGE SCALE GENOMIC DNA]</scope>
    <source>
        <strain>ATCC 11503 / BCRC 21390 / CBS 2605 / JCM 1781 / NBRC 1676 / NRRL YB-4239</strain>
    </source>
</reference>
<organism>
    <name type="scientific">Lodderomyces elongisporus (strain ATCC 11503 / CBS 2605 / JCM 1781 / NBRC 1676 / NRRL YB-4239)</name>
    <name type="common">Yeast</name>
    <name type="synonym">Saccharomyces elongisporus</name>
    <dbReference type="NCBI Taxonomy" id="379508"/>
    <lineage>
        <taxon>Eukaryota</taxon>
        <taxon>Fungi</taxon>
        <taxon>Dikarya</taxon>
        <taxon>Ascomycota</taxon>
        <taxon>Saccharomycotina</taxon>
        <taxon>Pichiomycetes</taxon>
        <taxon>Debaryomycetaceae</taxon>
        <taxon>Candida/Lodderomyces clade</taxon>
        <taxon>Lodderomyces</taxon>
    </lineage>
</organism>
<name>DBP4_LODEL</name>